<sequence>MFLLLSNDDGYASAGMRALVEVMEGAVERLIVMAPESNCSGVSHALTLTRPLTVQTHGNAIYSVNGTPADCVRVAVGGYFDEVPDMVISGINCGANLGDDVLYSGTVAAAFEGRYLKFPALAISNVAHRPKHLADTAQIVLDLFSFFKKNPLTGATLLNINIPDLPRAEIRGIRVTRLGQCRQERPLEKMINPRQEECYWIGANKGGFLADEGSDFAAIEQGFVSITPLQFDVTHDDQLEAVKHWLEPMR</sequence>
<name>SURE_DICNV</name>
<reference key="1">
    <citation type="journal article" date="2007" name="Nat. Biotechnol.">
        <title>Genome sequence and identification of candidate vaccine antigens from the animal pathogen Dichelobacter nodosus.</title>
        <authorList>
            <person name="Myers G.S.A."/>
            <person name="Parker D."/>
            <person name="Al-Hasani K."/>
            <person name="Kennan R.M."/>
            <person name="Seemann T."/>
            <person name="Ren Q."/>
            <person name="Badger J.H."/>
            <person name="Selengut J.D."/>
            <person name="Deboy R.T."/>
            <person name="Tettelin H."/>
            <person name="Boyce J.D."/>
            <person name="McCarl V.P."/>
            <person name="Han X."/>
            <person name="Nelson W.C."/>
            <person name="Madupu R."/>
            <person name="Mohamoud Y."/>
            <person name="Holley T."/>
            <person name="Fedorova N."/>
            <person name="Khouri H."/>
            <person name="Bottomley S.P."/>
            <person name="Whittington R.J."/>
            <person name="Adler B."/>
            <person name="Songer J.G."/>
            <person name="Rood J.I."/>
            <person name="Paulsen I.T."/>
        </authorList>
    </citation>
    <scope>NUCLEOTIDE SEQUENCE [LARGE SCALE GENOMIC DNA]</scope>
    <source>
        <strain>VCS1703A</strain>
    </source>
</reference>
<gene>
    <name evidence="1" type="primary">surE</name>
    <name type="ordered locus">DNO_0959</name>
</gene>
<feature type="chain" id="PRO_1000007726" description="5'-nucleotidase SurE">
    <location>
        <begin position="1"/>
        <end position="250"/>
    </location>
</feature>
<feature type="binding site" evidence="1">
    <location>
        <position position="8"/>
    </location>
    <ligand>
        <name>a divalent metal cation</name>
        <dbReference type="ChEBI" id="CHEBI:60240"/>
    </ligand>
</feature>
<feature type="binding site" evidence="1">
    <location>
        <position position="9"/>
    </location>
    <ligand>
        <name>a divalent metal cation</name>
        <dbReference type="ChEBI" id="CHEBI:60240"/>
    </ligand>
</feature>
<feature type="binding site" evidence="1">
    <location>
        <position position="40"/>
    </location>
    <ligand>
        <name>a divalent metal cation</name>
        <dbReference type="ChEBI" id="CHEBI:60240"/>
    </ligand>
</feature>
<feature type="binding site" evidence="1">
    <location>
        <position position="92"/>
    </location>
    <ligand>
        <name>a divalent metal cation</name>
        <dbReference type="ChEBI" id="CHEBI:60240"/>
    </ligand>
</feature>
<comment type="function">
    <text evidence="1">Nucleotidase that shows phosphatase activity on nucleoside 5'-monophosphates.</text>
</comment>
<comment type="catalytic activity">
    <reaction evidence="1">
        <text>a ribonucleoside 5'-phosphate + H2O = a ribonucleoside + phosphate</text>
        <dbReference type="Rhea" id="RHEA:12484"/>
        <dbReference type="ChEBI" id="CHEBI:15377"/>
        <dbReference type="ChEBI" id="CHEBI:18254"/>
        <dbReference type="ChEBI" id="CHEBI:43474"/>
        <dbReference type="ChEBI" id="CHEBI:58043"/>
        <dbReference type="EC" id="3.1.3.5"/>
    </reaction>
</comment>
<comment type="cofactor">
    <cofactor evidence="1">
        <name>a divalent metal cation</name>
        <dbReference type="ChEBI" id="CHEBI:60240"/>
    </cofactor>
    <text evidence="1">Binds 1 divalent metal cation per subunit.</text>
</comment>
<comment type="subcellular location">
    <subcellularLocation>
        <location evidence="1">Cytoplasm</location>
    </subcellularLocation>
</comment>
<comment type="similarity">
    <text evidence="1">Belongs to the SurE nucleotidase family.</text>
</comment>
<organism>
    <name type="scientific">Dichelobacter nodosus (strain VCS1703A)</name>
    <dbReference type="NCBI Taxonomy" id="246195"/>
    <lineage>
        <taxon>Bacteria</taxon>
        <taxon>Pseudomonadati</taxon>
        <taxon>Pseudomonadota</taxon>
        <taxon>Gammaproteobacteria</taxon>
        <taxon>Cardiobacteriales</taxon>
        <taxon>Cardiobacteriaceae</taxon>
        <taxon>Dichelobacter</taxon>
    </lineage>
</organism>
<dbReference type="EC" id="3.1.3.5" evidence="1"/>
<dbReference type="EMBL" id="CP000513">
    <property type="protein sequence ID" value="ABQ13741.1"/>
    <property type="molecule type" value="Genomic_DNA"/>
</dbReference>
<dbReference type="RefSeq" id="WP_012031272.1">
    <property type="nucleotide sequence ID" value="NC_009446.1"/>
</dbReference>
<dbReference type="SMR" id="A5EY39"/>
<dbReference type="STRING" id="246195.DNO_0959"/>
<dbReference type="KEGG" id="dno:DNO_0959"/>
<dbReference type="eggNOG" id="COG0496">
    <property type="taxonomic scope" value="Bacteria"/>
</dbReference>
<dbReference type="HOGENOM" id="CLU_045192_1_2_6"/>
<dbReference type="OrthoDB" id="9780815at2"/>
<dbReference type="Proteomes" id="UP000000248">
    <property type="component" value="Chromosome"/>
</dbReference>
<dbReference type="GO" id="GO:0005737">
    <property type="term" value="C:cytoplasm"/>
    <property type="evidence" value="ECO:0007669"/>
    <property type="project" value="UniProtKB-SubCell"/>
</dbReference>
<dbReference type="GO" id="GO:0008254">
    <property type="term" value="F:3'-nucleotidase activity"/>
    <property type="evidence" value="ECO:0007669"/>
    <property type="project" value="TreeGrafter"/>
</dbReference>
<dbReference type="GO" id="GO:0008253">
    <property type="term" value="F:5'-nucleotidase activity"/>
    <property type="evidence" value="ECO:0007669"/>
    <property type="project" value="UniProtKB-UniRule"/>
</dbReference>
<dbReference type="GO" id="GO:0004309">
    <property type="term" value="F:exopolyphosphatase activity"/>
    <property type="evidence" value="ECO:0007669"/>
    <property type="project" value="TreeGrafter"/>
</dbReference>
<dbReference type="GO" id="GO:0046872">
    <property type="term" value="F:metal ion binding"/>
    <property type="evidence" value="ECO:0007669"/>
    <property type="project" value="UniProtKB-UniRule"/>
</dbReference>
<dbReference type="GO" id="GO:0000166">
    <property type="term" value="F:nucleotide binding"/>
    <property type="evidence" value="ECO:0007669"/>
    <property type="project" value="UniProtKB-KW"/>
</dbReference>
<dbReference type="FunFam" id="3.40.1210.10:FF:000001">
    <property type="entry name" value="5'/3'-nucleotidase SurE"/>
    <property type="match status" value="1"/>
</dbReference>
<dbReference type="Gene3D" id="3.40.1210.10">
    <property type="entry name" value="Survival protein SurE-like phosphatase/nucleotidase"/>
    <property type="match status" value="1"/>
</dbReference>
<dbReference type="HAMAP" id="MF_00060">
    <property type="entry name" value="SurE"/>
    <property type="match status" value="1"/>
</dbReference>
<dbReference type="InterPro" id="IPR030048">
    <property type="entry name" value="SurE"/>
</dbReference>
<dbReference type="InterPro" id="IPR002828">
    <property type="entry name" value="SurE-like_Pase/nucleotidase"/>
</dbReference>
<dbReference type="InterPro" id="IPR036523">
    <property type="entry name" value="SurE-like_sf"/>
</dbReference>
<dbReference type="NCBIfam" id="NF001489">
    <property type="entry name" value="PRK00346.1-3"/>
    <property type="match status" value="1"/>
</dbReference>
<dbReference type="NCBIfam" id="NF001490">
    <property type="entry name" value="PRK00346.1-4"/>
    <property type="match status" value="1"/>
</dbReference>
<dbReference type="NCBIfam" id="TIGR00087">
    <property type="entry name" value="surE"/>
    <property type="match status" value="1"/>
</dbReference>
<dbReference type="PANTHER" id="PTHR30457">
    <property type="entry name" value="5'-NUCLEOTIDASE SURE"/>
    <property type="match status" value="1"/>
</dbReference>
<dbReference type="PANTHER" id="PTHR30457:SF12">
    <property type="entry name" value="5'_3'-NUCLEOTIDASE SURE"/>
    <property type="match status" value="1"/>
</dbReference>
<dbReference type="Pfam" id="PF01975">
    <property type="entry name" value="SurE"/>
    <property type="match status" value="1"/>
</dbReference>
<dbReference type="SUPFAM" id="SSF64167">
    <property type="entry name" value="SurE-like"/>
    <property type="match status" value="1"/>
</dbReference>
<proteinExistence type="inferred from homology"/>
<protein>
    <recommendedName>
        <fullName evidence="1">5'-nucleotidase SurE</fullName>
        <ecNumber evidence="1">3.1.3.5</ecNumber>
    </recommendedName>
    <alternativeName>
        <fullName evidence="1">Nucleoside 5'-monophosphate phosphohydrolase</fullName>
    </alternativeName>
</protein>
<keyword id="KW-0963">Cytoplasm</keyword>
<keyword id="KW-0378">Hydrolase</keyword>
<keyword id="KW-0479">Metal-binding</keyword>
<keyword id="KW-0547">Nucleotide-binding</keyword>
<keyword id="KW-1185">Reference proteome</keyword>
<evidence type="ECO:0000255" key="1">
    <source>
        <dbReference type="HAMAP-Rule" id="MF_00060"/>
    </source>
</evidence>
<accession>A5EY39</accession>